<keyword id="KW-0687">Ribonucleoprotein</keyword>
<keyword id="KW-0689">Ribosomal protein</keyword>
<keyword id="KW-0694">RNA-binding</keyword>
<keyword id="KW-0699">rRNA-binding</keyword>
<protein>
    <recommendedName>
        <fullName evidence="1">Large ribosomal subunit protein uL3</fullName>
    </recommendedName>
    <alternativeName>
        <fullName evidence="2">50S ribosomal protein L3</fullName>
    </alternativeName>
</protein>
<accession>Q6L1C7</accession>
<evidence type="ECO:0000255" key="1">
    <source>
        <dbReference type="HAMAP-Rule" id="MF_01325"/>
    </source>
</evidence>
<evidence type="ECO:0000305" key="2"/>
<comment type="function">
    <text evidence="1">One of the primary rRNA binding proteins, it binds directly near the 3'-end of the 23S rRNA, where it nucleates assembly of the 50S subunit.</text>
</comment>
<comment type="subunit">
    <text evidence="1">Part of the 50S ribosomal subunit. Forms a cluster with proteins L14 and L24e.</text>
</comment>
<comment type="similarity">
    <text evidence="1">Belongs to the universal ribosomal protein uL3 family.</text>
</comment>
<gene>
    <name evidence="1" type="primary">rpl3</name>
    <name type="ordered locus">PTO0640</name>
</gene>
<feature type="chain" id="PRO_0000241444" description="Large ribosomal subunit protein uL3">
    <location>
        <begin position="1"/>
        <end position="329"/>
    </location>
</feature>
<sequence>MATPHHSRRGSMAYYPRVRAKRIQGDIRSWPEIEGQTKVQAFAGYKVGMTHIQMVDYRKNSVTAGQVIMAPVTVVEVPPLTVMSIRYYARGDNGLEVISEEWAENIDKDVLRRINKINRHKKGIEVKDVDDVRLMVHTNPQLVSGVPSKTPEIFEIRIGGSTIENRIKYAKERLGSNISFSDFSKPGNFVDVIAVTKGKGFQGVVKRFGVKLLPRKNRKHRRMIGTLGPWHPDWVRNTVPQAGQVGFHQRTIHNIRIIKFDTKDHVDDINVKGGFLNYGIVRNDYVLLFGSVPGPAKRLIKMRDPARQTRPAVESIEVTYVSRESKQGD</sequence>
<dbReference type="EMBL" id="AE017261">
    <property type="protein sequence ID" value="AAT43225.1"/>
    <property type="molecule type" value="Genomic_DNA"/>
</dbReference>
<dbReference type="RefSeq" id="WP_011177441.1">
    <property type="nucleotide sequence ID" value="NC_005877.1"/>
</dbReference>
<dbReference type="SMR" id="Q6L1C7"/>
<dbReference type="FunCoup" id="Q6L1C7">
    <property type="interactions" value="120"/>
</dbReference>
<dbReference type="STRING" id="263820.PTO0640"/>
<dbReference type="PaxDb" id="263820-PTO0640"/>
<dbReference type="GeneID" id="2844593"/>
<dbReference type="KEGG" id="pto:PTO0640"/>
<dbReference type="PATRIC" id="fig|263820.9.peg.672"/>
<dbReference type="eggNOG" id="arCOG04070">
    <property type="taxonomic scope" value="Archaea"/>
</dbReference>
<dbReference type="HOGENOM" id="CLU_033361_2_0_2"/>
<dbReference type="InParanoid" id="Q6L1C7"/>
<dbReference type="OrthoDB" id="6121at2157"/>
<dbReference type="Proteomes" id="UP000000438">
    <property type="component" value="Chromosome"/>
</dbReference>
<dbReference type="GO" id="GO:0022625">
    <property type="term" value="C:cytosolic large ribosomal subunit"/>
    <property type="evidence" value="ECO:0007669"/>
    <property type="project" value="TreeGrafter"/>
</dbReference>
<dbReference type="GO" id="GO:0019843">
    <property type="term" value="F:rRNA binding"/>
    <property type="evidence" value="ECO:0007669"/>
    <property type="project" value="UniProtKB-UniRule"/>
</dbReference>
<dbReference type="GO" id="GO:0003735">
    <property type="term" value="F:structural constituent of ribosome"/>
    <property type="evidence" value="ECO:0007669"/>
    <property type="project" value="InterPro"/>
</dbReference>
<dbReference type="GO" id="GO:0006412">
    <property type="term" value="P:translation"/>
    <property type="evidence" value="ECO:0007669"/>
    <property type="project" value="UniProtKB-UniRule"/>
</dbReference>
<dbReference type="Gene3D" id="3.30.1430.10">
    <property type="match status" value="1"/>
</dbReference>
<dbReference type="Gene3D" id="4.10.960.10">
    <property type="entry name" value="Ribosomal protein L3, domain 3"/>
    <property type="match status" value="1"/>
</dbReference>
<dbReference type="Gene3D" id="2.40.30.10">
    <property type="entry name" value="Translation factors"/>
    <property type="match status" value="1"/>
</dbReference>
<dbReference type="HAMAP" id="MF_01325_A">
    <property type="entry name" value="Ribosomal_uL3_A"/>
    <property type="match status" value="1"/>
</dbReference>
<dbReference type="InterPro" id="IPR045077">
    <property type="entry name" value="L3_arc_euk"/>
</dbReference>
<dbReference type="InterPro" id="IPR044892">
    <property type="entry name" value="Ribosomal_L3_dom_3_arc_sf"/>
</dbReference>
<dbReference type="InterPro" id="IPR000597">
    <property type="entry name" value="Ribosomal_uL3"/>
</dbReference>
<dbReference type="InterPro" id="IPR019928">
    <property type="entry name" value="Ribosomal_uL3_arc"/>
</dbReference>
<dbReference type="InterPro" id="IPR009000">
    <property type="entry name" value="Transl_B-barrel_sf"/>
</dbReference>
<dbReference type="NCBIfam" id="TIGR03626">
    <property type="entry name" value="L3_arch"/>
    <property type="match status" value="1"/>
</dbReference>
<dbReference type="NCBIfam" id="NF003261">
    <property type="entry name" value="PRK04231.1"/>
    <property type="match status" value="1"/>
</dbReference>
<dbReference type="PANTHER" id="PTHR11363">
    <property type="entry name" value="60S RIBOSOMAL PROTEIN L3-RELATED"/>
    <property type="match status" value="1"/>
</dbReference>
<dbReference type="PANTHER" id="PTHR11363:SF5">
    <property type="entry name" value="LARGE RIBOSOMAL SUBUNIT PROTEIN UL3"/>
    <property type="match status" value="1"/>
</dbReference>
<dbReference type="Pfam" id="PF00297">
    <property type="entry name" value="Ribosomal_L3"/>
    <property type="match status" value="1"/>
</dbReference>
<dbReference type="SUPFAM" id="SSF50447">
    <property type="entry name" value="Translation proteins"/>
    <property type="match status" value="1"/>
</dbReference>
<organism>
    <name type="scientific">Picrophilus torridus (strain ATCC 700027 / DSM 9790 / JCM 10055 / NBRC 100828 / KAW 2/3)</name>
    <dbReference type="NCBI Taxonomy" id="1122961"/>
    <lineage>
        <taxon>Archaea</taxon>
        <taxon>Methanobacteriati</taxon>
        <taxon>Thermoplasmatota</taxon>
        <taxon>Thermoplasmata</taxon>
        <taxon>Thermoplasmatales</taxon>
        <taxon>Picrophilaceae</taxon>
        <taxon>Picrophilus</taxon>
    </lineage>
</organism>
<proteinExistence type="inferred from homology"/>
<name>RL3_PICTO</name>
<reference key="1">
    <citation type="journal article" date="2004" name="Proc. Natl. Acad. Sci. U.S.A.">
        <title>Genome sequence of Picrophilus torridus and its implications for life around pH 0.</title>
        <authorList>
            <person name="Fuetterer O."/>
            <person name="Angelov A."/>
            <person name="Liesegang H."/>
            <person name="Gottschalk G."/>
            <person name="Schleper C."/>
            <person name="Schepers B."/>
            <person name="Dock C."/>
            <person name="Antranikian G."/>
            <person name="Liebl W."/>
        </authorList>
    </citation>
    <scope>NUCLEOTIDE SEQUENCE [LARGE SCALE GENOMIC DNA]</scope>
    <source>
        <strain>ATCC 700027 / DSM 9790 / JCM 10055 / NBRC 100828 / KAW 2/3</strain>
    </source>
</reference>